<evidence type="ECO:0000250" key="1"/>
<evidence type="ECO:0000255" key="2"/>
<evidence type="ECO:0000255" key="3">
    <source>
        <dbReference type="PROSITE-ProRule" id="PRU00691"/>
    </source>
</evidence>
<evidence type="ECO:0000256" key="4">
    <source>
        <dbReference type="SAM" id="MobiDB-lite"/>
    </source>
</evidence>
<evidence type="ECO:0000269" key="5">
    <source>
    </source>
</evidence>
<evidence type="ECO:0000305" key="6"/>
<evidence type="ECO:0007744" key="7">
    <source>
    </source>
</evidence>
<sequence length="440" mass="49851">MRSLKLLLCWISFLTLSISISASSDDQFTLDGTVLELTDSNFDSAISTFDCIFVDFYAPWCGHCKRLNPELDAAAPILAKLKQPIVIAKLNADKYSRLARKIEIDAFPTLMLYNHGVPMEYYGPRKADLLVRYLKKFVAPDVAVLESDSTVKEFVEDAGTFFPVFIGFGLNESIISGLGRKYKKKAWFAVSKEVSEDTMVSYDFDKAPALVANHPTYNEHSVFYGPFEDGFLEEFVKQSFLPLILPINHDTLKLLKDDERKIVLTIVEDETHESLEKLYKALRAAAHANRDLVFGYVGVKQFEEFVDSFHVDKKTNLPKIVVWDGDEEYDQVTGIETITQEEDHLTQVSRFLEGYREGRTEKKKINGPSFMGFINSMIGIRSVYILVFLVAVIMMLRSLGQVEEPTGVRTATAVRERVDQATTVPEDESSEHKPSDKKED</sequence>
<accession>Q94F09</accession>
<accession>Q9LQG5</accession>
<reference key="1">
    <citation type="journal article" date="2000" name="Nature">
        <title>Sequence and analysis of chromosome 1 of the plant Arabidopsis thaliana.</title>
        <authorList>
            <person name="Theologis A."/>
            <person name="Ecker J.R."/>
            <person name="Palm C.J."/>
            <person name="Federspiel N.A."/>
            <person name="Kaul S."/>
            <person name="White O."/>
            <person name="Alonso J."/>
            <person name="Altafi H."/>
            <person name="Araujo R."/>
            <person name="Bowman C.L."/>
            <person name="Brooks S.Y."/>
            <person name="Buehler E."/>
            <person name="Chan A."/>
            <person name="Chao Q."/>
            <person name="Chen H."/>
            <person name="Cheuk R.F."/>
            <person name="Chin C.W."/>
            <person name="Chung M.K."/>
            <person name="Conn L."/>
            <person name="Conway A.B."/>
            <person name="Conway A.R."/>
            <person name="Creasy T.H."/>
            <person name="Dewar K."/>
            <person name="Dunn P."/>
            <person name="Etgu P."/>
            <person name="Feldblyum T.V."/>
            <person name="Feng J.-D."/>
            <person name="Fong B."/>
            <person name="Fujii C.Y."/>
            <person name="Gill J.E."/>
            <person name="Goldsmith A.D."/>
            <person name="Haas B."/>
            <person name="Hansen N.F."/>
            <person name="Hughes B."/>
            <person name="Huizar L."/>
            <person name="Hunter J.L."/>
            <person name="Jenkins J."/>
            <person name="Johnson-Hopson C."/>
            <person name="Khan S."/>
            <person name="Khaykin E."/>
            <person name="Kim C.J."/>
            <person name="Koo H.L."/>
            <person name="Kremenetskaia I."/>
            <person name="Kurtz D.B."/>
            <person name="Kwan A."/>
            <person name="Lam B."/>
            <person name="Langin-Hooper S."/>
            <person name="Lee A."/>
            <person name="Lee J.M."/>
            <person name="Lenz C.A."/>
            <person name="Li J.H."/>
            <person name="Li Y.-P."/>
            <person name="Lin X."/>
            <person name="Liu S.X."/>
            <person name="Liu Z.A."/>
            <person name="Luros J.S."/>
            <person name="Maiti R."/>
            <person name="Marziali A."/>
            <person name="Militscher J."/>
            <person name="Miranda M."/>
            <person name="Nguyen M."/>
            <person name="Nierman W.C."/>
            <person name="Osborne B.I."/>
            <person name="Pai G."/>
            <person name="Peterson J."/>
            <person name="Pham P.K."/>
            <person name="Rizzo M."/>
            <person name="Rooney T."/>
            <person name="Rowley D."/>
            <person name="Sakano H."/>
            <person name="Salzberg S.L."/>
            <person name="Schwartz J.R."/>
            <person name="Shinn P."/>
            <person name="Southwick A.M."/>
            <person name="Sun H."/>
            <person name="Tallon L.J."/>
            <person name="Tambunga G."/>
            <person name="Toriumi M.J."/>
            <person name="Town C.D."/>
            <person name="Utterback T."/>
            <person name="Van Aken S."/>
            <person name="Vaysberg M."/>
            <person name="Vysotskaia V.S."/>
            <person name="Walker M."/>
            <person name="Wu D."/>
            <person name="Yu G."/>
            <person name="Fraser C.M."/>
            <person name="Venter J.C."/>
            <person name="Davis R.W."/>
        </authorList>
    </citation>
    <scope>NUCLEOTIDE SEQUENCE [LARGE SCALE GENOMIC DNA]</scope>
    <source>
        <strain>cv. Columbia</strain>
    </source>
</reference>
<reference key="2">
    <citation type="journal article" date="2017" name="Plant J.">
        <title>Araport11: a complete reannotation of the Arabidopsis thaliana reference genome.</title>
        <authorList>
            <person name="Cheng C.Y."/>
            <person name="Krishnakumar V."/>
            <person name="Chan A.P."/>
            <person name="Thibaud-Nissen F."/>
            <person name="Schobel S."/>
            <person name="Town C.D."/>
        </authorList>
    </citation>
    <scope>GENOME REANNOTATION</scope>
    <source>
        <strain>cv. Columbia</strain>
    </source>
</reference>
<reference key="3">
    <citation type="journal article" date="2003" name="Science">
        <title>Empirical analysis of transcriptional activity in the Arabidopsis genome.</title>
        <authorList>
            <person name="Yamada K."/>
            <person name="Lim J."/>
            <person name="Dale J.M."/>
            <person name="Chen H."/>
            <person name="Shinn P."/>
            <person name="Palm C.J."/>
            <person name="Southwick A.M."/>
            <person name="Wu H.C."/>
            <person name="Kim C.J."/>
            <person name="Nguyen M."/>
            <person name="Pham P.K."/>
            <person name="Cheuk R.F."/>
            <person name="Karlin-Newmann G."/>
            <person name="Liu S.X."/>
            <person name="Lam B."/>
            <person name="Sakano H."/>
            <person name="Wu T."/>
            <person name="Yu G."/>
            <person name="Miranda M."/>
            <person name="Quach H.L."/>
            <person name="Tripp M."/>
            <person name="Chang C.H."/>
            <person name="Lee J.M."/>
            <person name="Toriumi M.J."/>
            <person name="Chan M.M."/>
            <person name="Tang C.C."/>
            <person name="Onodera C.S."/>
            <person name="Deng J.M."/>
            <person name="Akiyama K."/>
            <person name="Ansari Y."/>
            <person name="Arakawa T."/>
            <person name="Banh J."/>
            <person name="Banno F."/>
            <person name="Bowser L."/>
            <person name="Brooks S.Y."/>
            <person name="Carninci P."/>
            <person name="Chao Q."/>
            <person name="Choy N."/>
            <person name="Enju A."/>
            <person name="Goldsmith A.D."/>
            <person name="Gurjal M."/>
            <person name="Hansen N.F."/>
            <person name="Hayashizaki Y."/>
            <person name="Johnson-Hopson C."/>
            <person name="Hsuan V.W."/>
            <person name="Iida K."/>
            <person name="Karnes M."/>
            <person name="Khan S."/>
            <person name="Koesema E."/>
            <person name="Ishida J."/>
            <person name="Jiang P.X."/>
            <person name="Jones T."/>
            <person name="Kawai J."/>
            <person name="Kamiya A."/>
            <person name="Meyers C."/>
            <person name="Nakajima M."/>
            <person name="Narusaka M."/>
            <person name="Seki M."/>
            <person name="Sakurai T."/>
            <person name="Satou M."/>
            <person name="Tamse R."/>
            <person name="Vaysberg M."/>
            <person name="Wallender E.K."/>
            <person name="Wong C."/>
            <person name="Yamamura Y."/>
            <person name="Yuan S."/>
            <person name="Shinozaki K."/>
            <person name="Davis R.W."/>
            <person name="Theologis A."/>
            <person name="Ecker J.R."/>
        </authorList>
    </citation>
    <scope>NUCLEOTIDE SEQUENCE [LARGE SCALE MRNA]</scope>
    <source>
        <strain>cv. Columbia</strain>
    </source>
</reference>
<reference key="4">
    <citation type="journal article" date="2005" name="Plant Physiol.">
        <title>Phylogenetic analyses identify 10 classes of the protein disulfide isomerase family in plants, including single-domain protein disulfide isomerase-related proteins.</title>
        <authorList>
            <person name="Houston N.L."/>
            <person name="Fan C."/>
            <person name="Xiang J.Q."/>
            <person name="Schulze J.M."/>
            <person name="Jung R."/>
            <person name="Boston R.S."/>
        </authorList>
    </citation>
    <scope>GENE FAMILY</scope>
    <scope>NOMENCLATURE</scope>
</reference>
<reference key="5">
    <citation type="journal article" date="2008" name="Mol. Genet. Genomics">
        <title>Endoplasmic reticulum stress activates the expression of a sub-group of protein disulfide isomerase genes and AtbZIP60 modulates the response in Arabidopsis thaliana.</title>
        <authorList>
            <person name="Lu D.-P."/>
            <person name="Christopher D.A."/>
        </authorList>
    </citation>
    <scope>TISSUE SPECIFICITY</scope>
    <scope>INDUCTION</scope>
</reference>
<reference key="6">
    <citation type="journal article" date="2009" name="J. Proteomics">
        <title>Phosphoproteomic analysis of nuclei-enriched fractions from Arabidopsis thaliana.</title>
        <authorList>
            <person name="Jones A.M.E."/>
            <person name="MacLean D."/>
            <person name="Studholme D.J."/>
            <person name="Serna-Sanz A."/>
            <person name="Andreasson E."/>
            <person name="Rathjen J.P."/>
            <person name="Peck S.C."/>
        </authorList>
    </citation>
    <scope>PHOSPHORYLATION [LARGE SCALE ANALYSIS] AT THR-160</scope>
    <scope>IDENTIFICATION BY MASS SPECTROMETRY [LARGE SCALE ANALYSIS]</scope>
    <source>
        <strain>cv. Columbia</strain>
    </source>
</reference>
<reference key="7">
    <citation type="journal article" date="2010" name="BMC Plant Biol.">
        <title>The protein disulfide isomerase gene family in bread wheat (T. aestivum L.).</title>
        <authorList>
            <person name="d'Aloisio E."/>
            <person name="Paolacci A.R."/>
            <person name="Dhanapal A.P."/>
            <person name="Tanzarella O.A."/>
            <person name="Porceddu E."/>
            <person name="Ciaffi M."/>
        </authorList>
    </citation>
    <scope>GENE FAMILY</scope>
    <scope>NOMENCLATURE</scope>
</reference>
<organism>
    <name type="scientific">Arabidopsis thaliana</name>
    <name type="common">Mouse-ear cress</name>
    <dbReference type="NCBI Taxonomy" id="3702"/>
    <lineage>
        <taxon>Eukaryota</taxon>
        <taxon>Viridiplantae</taxon>
        <taxon>Streptophyta</taxon>
        <taxon>Embryophyta</taxon>
        <taxon>Tracheophyta</taxon>
        <taxon>Spermatophyta</taxon>
        <taxon>Magnoliopsida</taxon>
        <taxon>eudicotyledons</taxon>
        <taxon>Gunneridae</taxon>
        <taxon>Pentapetalae</taxon>
        <taxon>rosids</taxon>
        <taxon>malvids</taxon>
        <taxon>Brassicales</taxon>
        <taxon>Brassicaceae</taxon>
        <taxon>Camelineae</taxon>
        <taxon>Arabidopsis</taxon>
    </lineage>
</organism>
<comment type="function">
    <text evidence="1">Acts as a protein-folding catalyst that interacts with nascent polypeptides to catalyze the formation, isomerization, and reduction or oxidation of disulfide bonds.</text>
</comment>
<comment type="subcellular location">
    <subcellularLocation>
        <location evidence="6">Membrane</location>
        <topology evidence="6">Single-pass membrane protein</topology>
    </subcellularLocation>
</comment>
<comment type="tissue specificity">
    <text evidence="5">Widely expressed.</text>
</comment>
<comment type="induction">
    <text evidence="5">Slightly down-regulated by chemically-induced ER stress response.</text>
</comment>
<comment type="similarity">
    <text evidence="6">Belongs to the protein disulfide isomerase family.</text>
</comment>
<comment type="sequence caution" evidence="6">
    <conflict type="erroneous gene model prediction">
        <sequence resource="EMBL-CDS" id="AAF79381"/>
    </conflict>
</comment>
<dbReference type="EMBL" id="AC007887">
    <property type="protein sequence ID" value="AAF79381.1"/>
    <property type="status" value="ALT_SEQ"/>
    <property type="molecule type" value="Genomic_DNA"/>
</dbReference>
<dbReference type="EMBL" id="CP002684">
    <property type="protein sequence ID" value="AEE31818.1"/>
    <property type="molecule type" value="Genomic_DNA"/>
</dbReference>
<dbReference type="EMBL" id="AF386986">
    <property type="protein sequence ID" value="AAK62431.1"/>
    <property type="molecule type" value="mRNA"/>
</dbReference>
<dbReference type="EMBL" id="BT008751">
    <property type="protein sequence ID" value="AAP49513.1"/>
    <property type="molecule type" value="mRNA"/>
</dbReference>
<dbReference type="RefSeq" id="NP_564462.1">
    <property type="nucleotide sequence ID" value="NM_103262.5"/>
</dbReference>
<dbReference type="SMR" id="Q94F09"/>
<dbReference type="BioGRID" id="25693">
    <property type="interactions" value="7"/>
</dbReference>
<dbReference type="FunCoup" id="Q94F09">
    <property type="interactions" value="441"/>
</dbReference>
<dbReference type="IntAct" id="Q94F09">
    <property type="interactions" value="7"/>
</dbReference>
<dbReference type="STRING" id="3702.Q94F09"/>
<dbReference type="GlyCosmos" id="Q94F09">
    <property type="glycosylation" value="1 site, No reported glycans"/>
</dbReference>
<dbReference type="GlyGen" id="Q94F09">
    <property type="glycosylation" value="1 site"/>
</dbReference>
<dbReference type="iPTMnet" id="Q94F09"/>
<dbReference type="PaxDb" id="3702-AT1G35620.1"/>
<dbReference type="ProteomicsDB" id="236804"/>
<dbReference type="EnsemblPlants" id="AT1G35620.1">
    <property type="protein sequence ID" value="AT1G35620.1"/>
    <property type="gene ID" value="AT1G35620"/>
</dbReference>
<dbReference type="GeneID" id="840461"/>
<dbReference type="Gramene" id="AT1G35620.1">
    <property type="protein sequence ID" value="AT1G35620.1"/>
    <property type="gene ID" value="AT1G35620"/>
</dbReference>
<dbReference type="KEGG" id="ath:AT1G35620"/>
<dbReference type="Araport" id="AT1G35620"/>
<dbReference type="TAIR" id="AT1G35620">
    <property type="gene designation" value="PDIL5-2"/>
</dbReference>
<dbReference type="eggNOG" id="KOG0190">
    <property type="taxonomic scope" value="Eukaryota"/>
</dbReference>
<dbReference type="HOGENOM" id="CLU_054116_0_0_1"/>
<dbReference type="InParanoid" id="Q94F09"/>
<dbReference type="OMA" id="GIEMRNM"/>
<dbReference type="PhylomeDB" id="Q94F09"/>
<dbReference type="PRO" id="PR:Q94F09"/>
<dbReference type="Proteomes" id="UP000006548">
    <property type="component" value="Chromosome 1"/>
</dbReference>
<dbReference type="ExpressionAtlas" id="Q94F09">
    <property type="expression patterns" value="baseline and differential"/>
</dbReference>
<dbReference type="GO" id="GO:0005783">
    <property type="term" value="C:endoplasmic reticulum"/>
    <property type="evidence" value="ECO:0007005"/>
    <property type="project" value="TAIR"/>
</dbReference>
<dbReference type="GO" id="GO:0016020">
    <property type="term" value="C:membrane"/>
    <property type="evidence" value="ECO:0007669"/>
    <property type="project" value="UniProtKB-SubCell"/>
</dbReference>
<dbReference type="GO" id="GO:0005634">
    <property type="term" value="C:nucleus"/>
    <property type="evidence" value="ECO:0007005"/>
    <property type="project" value="TAIR"/>
</dbReference>
<dbReference type="GO" id="GO:0009505">
    <property type="term" value="C:plant-type cell wall"/>
    <property type="evidence" value="ECO:0007005"/>
    <property type="project" value="TAIR"/>
</dbReference>
<dbReference type="GO" id="GO:0000325">
    <property type="term" value="C:plant-type vacuole"/>
    <property type="evidence" value="ECO:0007005"/>
    <property type="project" value="TAIR"/>
</dbReference>
<dbReference type="GO" id="GO:0009506">
    <property type="term" value="C:plasmodesma"/>
    <property type="evidence" value="ECO:0007005"/>
    <property type="project" value="TAIR"/>
</dbReference>
<dbReference type="GO" id="GO:0003756">
    <property type="term" value="F:protein disulfide isomerase activity"/>
    <property type="evidence" value="ECO:0000250"/>
    <property type="project" value="TAIR"/>
</dbReference>
<dbReference type="CDD" id="cd02961">
    <property type="entry name" value="PDI_a_family"/>
    <property type="match status" value="1"/>
</dbReference>
<dbReference type="FunFam" id="3.40.30.10:FF:000193">
    <property type="entry name" value="Protein disulfide isomerase-like 5-2"/>
    <property type="match status" value="1"/>
</dbReference>
<dbReference type="FunFam" id="3.40.30.10:FF:000107">
    <property type="entry name" value="Protein disulfide-isomerase 5-2"/>
    <property type="match status" value="1"/>
</dbReference>
<dbReference type="Gene3D" id="3.40.30.10">
    <property type="entry name" value="Glutaredoxin"/>
    <property type="match status" value="2"/>
</dbReference>
<dbReference type="InterPro" id="IPR036249">
    <property type="entry name" value="Thioredoxin-like_sf"/>
</dbReference>
<dbReference type="InterPro" id="IPR017937">
    <property type="entry name" value="Thioredoxin_CS"/>
</dbReference>
<dbReference type="InterPro" id="IPR013766">
    <property type="entry name" value="Thioredoxin_domain"/>
</dbReference>
<dbReference type="PANTHER" id="PTHR18929">
    <property type="entry name" value="PROTEIN DISULFIDE ISOMERASE"/>
    <property type="match status" value="1"/>
</dbReference>
<dbReference type="PANTHER" id="PTHR18929:SF218">
    <property type="entry name" value="PROTEIN DISULFIDE-ISOMERASE 5-2"/>
    <property type="match status" value="1"/>
</dbReference>
<dbReference type="Pfam" id="PF00085">
    <property type="entry name" value="Thioredoxin"/>
    <property type="match status" value="1"/>
</dbReference>
<dbReference type="Pfam" id="PF13848">
    <property type="entry name" value="Thioredoxin_6"/>
    <property type="match status" value="1"/>
</dbReference>
<dbReference type="PRINTS" id="PR00421">
    <property type="entry name" value="THIOREDOXIN"/>
</dbReference>
<dbReference type="SUPFAM" id="SSF52833">
    <property type="entry name" value="Thioredoxin-like"/>
    <property type="match status" value="1"/>
</dbReference>
<dbReference type="PROSITE" id="PS00194">
    <property type="entry name" value="THIOREDOXIN_1"/>
    <property type="match status" value="1"/>
</dbReference>
<dbReference type="PROSITE" id="PS51352">
    <property type="entry name" value="THIOREDOXIN_2"/>
    <property type="match status" value="1"/>
</dbReference>
<keyword id="KW-1015">Disulfide bond</keyword>
<keyword id="KW-0325">Glycoprotein</keyword>
<keyword id="KW-0472">Membrane</keyword>
<keyword id="KW-0597">Phosphoprotein</keyword>
<keyword id="KW-0676">Redox-active center</keyword>
<keyword id="KW-1185">Reference proteome</keyword>
<keyword id="KW-0732">Signal</keyword>
<keyword id="KW-0812">Transmembrane</keyword>
<keyword id="KW-1133">Transmembrane helix</keyword>
<protein>
    <recommendedName>
        <fullName>Protein disulfide-isomerase 5-2</fullName>
        <shortName>AtPDIL5-2</shortName>
    </recommendedName>
    <alternativeName>
        <fullName>Protein disulfide-isomerase 7-1</fullName>
        <shortName>AtPDIL7-1</shortName>
    </alternativeName>
    <alternativeName>
        <fullName>Protein disulfide-isomerase 8</fullName>
        <shortName>PDI8</shortName>
    </alternativeName>
</protein>
<feature type="signal peptide" evidence="2">
    <location>
        <begin position="1"/>
        <end position="23"/>
    </location>
</feature>
<feature type="chain" id="PRO_0000400025" description="Protein disulfide-isomerase 5-2">
    <location>
        <begin position="24"/>
        <end position="440"/>
    </location>
</feature>
<feature type="transmembrane region" description="Helical" evidence="2">
    <location>
        <begin position="376"/>
        <end position="396"/>
    </location>
</feature>
<feature type="domain" description="Thioredoxin" evidence="3">
    <location>
        <begin position="24"/>
        <end position="139"/>
    </location>
</feature>
<feature type="region of interest" description="Disordered" evidence="4">
    <location>
        <begin position="406"/>
        <end position="440"/>
    </location>
</feature>
<feature type="compositionally biased region" description="Basic and acidic residues" evidence="4">
    <location>
        <begin position="430"/>
        <end position="440"/>
    </location>
</feature>
<feature type="active site" description="Nucleophile" evidence="1">
    <location>
        <position position="61"/>
    </location>
</feature>
<feature type="active site" description="Nucleophile" evidence="1">
    <location>
        <position position="64"/>
    </location>
</feature>
<feature type="site" description="Contributes to redox potential value" evidence="1">
    <location>
        <position position="62"/>
    </location>
</feature>
<feature type="site" description="Contributes to redox potential value" evidence="1">
    <location>
        <position position="63"/>
    </location>
</feature>
<feature type="site" description="Lowers pKa of C-terminal Cys of active site" evidence="1">
    <location>
        <position position="125"/>
    </location>
</feature>
<feature type="modified residue" description="Phosphothreonine" evidence="7">
    <location>
        <position position="160"/>
    </location>
</feature>
<feature type="glycosylation site" description="N-linked (GlcNAc...) asparagine" evidence="2">
    <location>
        <position position="171"/>
    </location>
</feature>
<feature type="disulfide bond" description="Redox-active" evidence="3">
    <location>
        <begin position="61"/>
        <end position="64"/>
    </location>
</feature>
<name>PDI52_ARATH</name>
<gene>
    <name type="primary">PDIL5-2</name>
    <name type="synonym">PDI8</name>
    <name type="synonym">PDIL7-1</name>
    <name type="ordered locus">At1g35620</name>
    <name type="ORF">F15O4.20</name>
</gene>
<proteinExistence type="evidence at protein level"/>